<organism evidence="6">
    <name type="scientific">Arabidopsis thaliana</name>
    <name type="common">Mouse-ear cress</name>
    <dbReference type="NCBI Taxonomy" id="3702"/>
    <lineage>
        <taxon>Eukaryota</taxon>
        <taxon>Viridiplantae</taxon>
        <taxon>Streptophyta</taxon>
        <taxon>Embryophyta</taxon>
        <taxon>Tracheophyta</taxon>
        <taxon>Spermatophyta</taxon>
        <taxon>Magnoliopsida</taxon>
        <taxon>eudicotyledons</taxon>
        <taxon>Gunneridae</taxon>
        <taxon>Pentapetalae</taxon>
        <taxon>rosids</taxon>
        <taxon>malvids</taxon>
        <taxon>Brassicales</taxon>
        <taxon>Brassicaceae</taxon>
        <taxon>Camelineae</taxon>
        <taxon>Arabidopsis</taxon>
    </lineage>
</organism>
<keyword id="KW-0067">ATP-binding</keyword>
<keyword id="KW-0378">Hydrolase</keyword>
<keyword id="KW-0460">Magnesium</keyword>
<keyword id="KW-0547">Nucleotide-binding</keyword>
<keyword id="KW-1185">Reference proteome</keyword>
<keyword id="KW-0732">Signal</keyword>
<feature type="signal peptide" evidence="2">
    <location>
        <begin position="1"/>
        <end position="30"/>
    </location>
</feature>
<feature type="chain" id="PRO_0000434721" description="AAA-ATPase At5g40000" evidence="2">
    <location>
        <begin position="31"/>
        <end position="470"/>
    </location>
</feature>
<feature type="binding site" evidence="2">
    <location>
        <begin position="248"/>
        <end position="255"/>
    </location>
    <ligand>
        <name>ATP</name>
        <dbReference type="ChEBI" id="CHEBI:30616"/>
    </ligand>
</feature>
<gene>
    <name evidence="4" type="ordered locus">At5g40000</name>
    <name evidence="5" type="ORF">MYH19.20</name>
</gene>
<comment type="catalytic activity">
    <reaction evidence="1">
        <text>ATP + H2O = ADP + phosphate + H(+)</text>
        <dbReference type="Rhea" id="RHEA:13065"/>
        <dbReference type="ChEBI" id="CHEBI:15377"/>
        <dbReference type="ChEBI" id="CHEBI:15378"/>
        <dbReference type="ChEBI" id="CHEBI:30616"/>
        <dbReference type="ChEBI" id="CHEBI:43474"/>
        <dbReference type="ChEBI" id="CHEBI:456216"/>
    </reaction>
</comment>
<comment type="cofactor">
    <cofactor evidence="1">
        <name>Mg(2+)</name>
        <dbReference type="ChEBI" id="CHEBI:18420"/>
    </cofactor>
</comment>
<comment type="similarity">
    <text evidence="3">Belongs to the AAA ATPase family. BCS1 subfamily.</text>
</comment>
<comment type="sequence caution" evidence="3">
    <conflict type="erroneous initiation">
        <sequence resource="EMBL-CDS" id="BAB10224"/>
    </conflict>
    <text>Truncated N-terminus.</text>
</comment>
<evidence type="ECO:0000250" key="1">
    <source>
        <dbReference type="UniProtKB" id="Q9FLD5"/>
    </source>
</evidence>
<evidence type="ECO:0000255" key="2"/>
<evidence type="ECO:0000305" key="3"/>
<evidence type="ECO:0000312" key="4">
    <source>
        <dbReference type="EMBL" id="AED94500.1"/>
    </source>
</evidence>
<evidence type="ECO:0000312" key="5">
    <source>
        <dbReference type="EMBL" id="BAB10224.1"/>
    </source>
</evidence>
<evidence type="ECO:0000312" key="6">
    <source>
        <dbReference type="Proteomes" id="UP000006548"/>
    </source>
</evidence>
<name>AATPJ_ARATH</name>
<reference key="1">
    <citation type="journal article" date="1998" name="DNA Res.">
        <title>Structural analysis of Arabidopsis thaliana chromosome 5. IV. Sequence features of the regions of 1,456,315 bp covered by nineteen physically assigned P1 and TAC clones.</title>
        <authorList>
            <person name="Sato S."/>
            <person name="Kaneko T."/>
            <person name="Kotani H."/>
            <person name="Nakamura Y."/>
            <person name="Asamizu E."/>
            <person name="Miyajima N."/>
            <person name="Tabata S."/>
        </authorList>
    </citation>
    <scope>NUCLEOTIDE SEQUENCE [LARGE SCALE GENOMIC DNA]</scope>
    <source>
        <strain>cv. Columbia</strain>
    </source>
</reference>
<reference key="2">
    <citation type="journal article" date="2017" name="Plant J.">
        <title>Araport11: a complete reannotation of the Arabidopsis thaliana reference genome.</title>
        <authorList>
            <person name="Cheng C.Y."/>
            <person name="Krishnakumar V."/>
            <person name="Chan A.P."/>
            <person name="Thibaud-Nissen F."/>
            <person name="Schobel S."/>
            <person name="Town C.D."/>
        </authorList>
    </citation>
    <scope>GENOME REANNOTATION</scope>
    <source>
        <strain>cv. Columbia</strain>
    </source>
</reference>
<accession>F4KFX5</accession>
<accession>Q9FLD6</accession>
<dbReference type="EC" id="3.6.1.-" evidence="1"/>
<dbReference type="EMBL" id="AB010077">
    <property type="protein sequence ID" value="BAB10224.1"/>
    <property type="status" value="ALT_INIT"/>
    <property type="molecule type" value="Genomic_DNA"/>
</dbReference>
<dbReference type="EMBL" id="CP002688">
    <property type="protein sequence ID" value="AED94500.1"/>
    <property type="molecule type" value="Genomic_DNA"/>
</dbReference>
<dbReference type="RefSeq" id="NP_198816.1">
    <property type="nucleotide sequence ID" value="NM_123363.2"/>
</dbReference>
<dbReference type="SMR" id="F4KFX5"/>
<dbReference type="FunCoup" id="F4KFX5">
    <property type="interactions" value="1325"/>
</dbReference>
<dbReference type="STRING" id="3702.F4KFX5"/>
<dbReference type="iPTMnet" id="F4KFX5"/>
<dbReference type="SwissPalm" id="F4KFX5"/>
<dbReference type="PaxDb" id="3702-AT5G40000.1"/>
<dbReference type="ProteomicsDB" id="244594"/>
<dbReference type="EnsemblPlants" id="AT5G40000.1">
    <property type="protein sequence ID" value="AT5G40000.1"/>
    <property type="gene ID" value="AT5G40000"/>
</dbReference>
<dbReference type="GeneID" id="833997"/>
<dbReference type="Gramene" id="AT5G40000.1">
    <property type="protein sequence ID" value="AT5G40000.1"/>
    <property type="gene ID" value="AT5G40000"/>
</dbReference>
<dbReference type="KEGG" id="ath:AT5G40000"/>
<dbReference type="Araport" id="AT5G40000"/>
<dbReference type="TAIR" id="AT5G40000"/>
<dbReference type="eggNOG" id="KOG0743">
    <property type="taxonomic scope" value="Eukaryota"/>
</dbReference>
<dbReference type="HOGENOM" id="CLU_010189_0_1_1"/>
<dbReference type="InParanoid" id="F4KFX5"/>
<dbReference type="OMA" id="SHNMWRS"/>
<dbReference type="PRO" id="PR:F4KFX5"/>
<dbReference type="Proteomes" id="UP000006548">
    <property type="component" value="Chromosome 5"/>
</dbReference>
<dbReference type="ExpressionAtlas" id="F4KFX5">
    <property type="expression patterns" value="baseline and differential"/>
</dbReference>
<dbReference type="GO" id="GO:0005886">
    <property type="term" value="C:plasma membrane"/>
    <property type="evidence" value="ECO:0007005"/>
    <property type="project" value="TAIR"/>
</dbReference>
<dbReference type="GO" id="GO:0005524">
    <property type="term" value="F:ATP binding"/>
    <property type="evidence" value="ECO:0007669"/>
    <property type="project" value="UniProtKB-KW"/>
</dbReference>
<dbReference type="GO" id="GO:0016887">
    <property type="term" value="F:ATP hydrolysis activity"/>
    <property type="evidence" value="ECO:0007669"/>
    <property type="project" value="InterPro"/>
</dbReference>
<dbReference type="GO" id="GO:0006950">
    <property type="term" value="P:response to stress"/>
    <property type="evidence" value="ECO:0007669"/>
    <property type="project" value="UniProtKB-ARBA"/>
</dbReference>
<dbReference type="CDD" id="cd19510">
    <property type="entry name" value="RecA-like_BCS1"/>
    <property type="match status" value="1"/>
</dbReference>
<dbReference type="FunFam" id="3.40.50.300:FF:001122">
    <property type="entry name" value="AAA-ATPase ASD, mitochondrial"/>
    <property type="match status" value="1"/>
</dbReference>
<dbReference type="Gene3D" id="6.10.280.40">
    <property type="match status" value="1"/>
</dbReference>
<dbReference type="Gene3D" id="3.40.50.300">
    <property type="entry name" value="P-loop containing nucleotide triphosphate hydrolases"/>
    <property type="match status" value="1"/>
</dbReference>
<dbReference type="InterPro" id="IPR003593">
    <property type="entry name" value="AAA+_ATPase"/>
</dbReference>
<dbReference type="InterPro" id="IPR025753">
    <property type="entry name" value="AAA_N_dom"/>
</dbReference>
<dbReference type="InterPro" id="IPR003959">
    <property type="entry name" value="ATPase_AAA_core"/>
</dbReference>
<dbReference type="InterPro" id="IPR003960">
    <property type="entry name" value="ATPase_AAA_CS"/>
</dbReference>
<dbReference type="InterPro" id="IPR050747">
    <property type="entry name" value="Mitochondrial_chaperone_BCS1"/>
</dbReference>
<dbReference type="InterPro" id="IPR027417">
    <property type="entry name" value="P-loop_NTPase"/>
</dbReference>
<dbReference type="PANTHER" id="PTHR23070">
    <property type="entry name" value="BCS1 AAA-TYPE ATPASE"/>
    <property type="match status" value="1"/>
</dbReference>
<dbReference type="Pfam" id="PF00004">
    <property type="entry name" value="AAA"/>
    <property type="match status" value="1"/>
</dbReference>
<dbReference type="Pfam" id="PF14363">
    <property type="entry name" value="AAA_assoc"/>
    <property type="match status" value="1"/>
</dbReference>
<dbReference type="SMART" id="SM00382">
    <property type="entry name" value="AAA"/>
    <property type="match status" value="1"/>
</dbReference>
<dbReference type="SUPFAM" id="SSF52540">
    <property type="entry name" value="P-loop containing nucleoside triphosphate hydrolases"/>
    <property type="match status" value="1"/>
</dbReference>
<dbReference type="PROSITE" id="PS00674">
    <property type="entry name" value="AAA"/>
    <property type="match status" value="1"/>
</dbReference>
<protein>
    <recommendedName>
        <fullName>AAA-ATPase At5g40000</fullName>
        <ecNumber evidence="1">3.6.1.-</ecNumber>
    </recommendedName>
</protein>
<sequence>MMMMGDSFGSIGSSMASLFFLWATIQQIFPDHLKITIKEFLLSSFQQLCFAQRVSDHFTNLFSPYVEIHFPESDEYSFNQAFSAIDTYLDSKATDKTKHLRGSQVKESKGLVLKRNEAKVRDEYKGANVWWERVVDNDGNRYYKLTFHNRARTLITNSYIKYVVEEGKSIIVKNKQTRLFTNNLSTQWVFGQNMWRSIEFEHPASFQTLAMDPKKKEEIVNDLIAFSNGKEYYKKIGKAWKRGYLLYGPPGTGKSTMISAMANLLNYNIYDLELTAVKNNSELKKLLTATSSKSIIVIEDIDCSADFTSNRIKKESNSRERYGKEDKDENSVTLSGLLNFIDGIWSACGQERIVVFTTNHLEKLDPALIRRGRMDMHIELSYCTYEAFKILAKNYLDLDGDDAHPLFSEIKALLEETKISPADVAENLMARNQQIDVDKSLNLLISALEEENQYQRSQQEKKKSKFKIFG</sequence>
<proteinExistence type="inferred from homology"/>